<evidence type="ECO:0000255" key="1">
    <source>
        <dbReference type="HAMAP-Rule" id="MF_00235"/>
    </source>
</evidence>
<dbReference type="EC" id="2.7.4.3" evidence="1"/>
<dbReference type="EMBL" id="CP001161">
    <property type="protein sequence ID" value="ACL30832.1"/>
    <property type="molecule type" value="Genomic_DNA"/>
</dbReference>
<dbReference type="RefSeq" id="WP_009874438.1">
    <property type="nucleotide sequence ID" value="NC_011833.1"/>
</dbReference>
<dbReference type="SMR" id="B8D9R1"/>
<dbReference type="KEGG" id="bap:BUAP5A_477"/>
<dbReference type="HOGENOM" id="CLU_032354_1_2_6"/>
<dbReference type="OrthoDB" id="9805030at2"/>
<dbReference type="UniPathway" id="UPA00588">
    <property type="reaction ID" value="UER00649"/>
</dbReference>
<dbReference type="Proteomes" id="UP000006904">
    <property type="component" value="Chromosome"/>
</dbReference>
<dbReference type="GO" id="GO:0005737">
    <property type="term" value="C:cytoplasm"/>
    <property type="evidence" value="ECO:0007669"/>
    <property type="project" value="UniProtKB-SubCell"/>
</dbReference>
<dbReference type="GO" id="GO:0004017">
    <property type="term" value="F:adenylate kinase activity"/>
    <property type="evidence" value="ECO:0007669"/>
    <property type="project" value="UniProtKB-UniRule"/>
</dbReference>
<dbReference type="GO" id="GO:0005524">
    <property type="term" value="F:ATP binding"/>
    <property type="evidence" value="ECO:0007669"/>
    <property type="project" value="UniProtKB-UniRule"/>
</dbReference>
<dbReference type="GO" id="GO:0044209">
    <property type="term" value="P:AMP salvage"/>
    <property type="evidence" value="ECO:0007669"/>
    <property type="project" value="UniProtKB-UniRule"/>
</dbReference>
<dbReference type="CDD" id="cd01428">
    <property type="entry name" value="ADK"/>
    <property type="match status" value="1"/>
</dbReference>
<dbReference type="FunFam" id="3.40.50.300:FF:000106">
    <property type="entry name" value="Adenylate kinase mitochondrial"/>
    <property type="match status" value="1"/>
</dbReference>
<dbReference type="Gene3D" id="3.40.50.300">
    <property type="entry name" value="P-loop containing nucleotide triphosphate hydrolases"/>
    <property type="match status" value="1"/>
</dbReference>
<dbReference type="HAMAP" id="MF_00235">
    <property type="entry name" value="Adenylate_kinase_Adk"/>
    <property type="match status" value="1"/>
</dbReference>
<dbReference type="InterPro" id="IPR006259">
    <property type="entry name" value="Adenyl_kin_sub"/>
</dbReference>
<dbReference type="InterPro" id="IPR000850">
    <property type="entry name" value="Adenylat/UMP-CMP_kin"/>
</dbReference>
<dbReference type="InterPro" id="IPR033690">
    <property type="entry name" value="Adenylat_kinase_CS"/>
</dbReference>
<dbReference type="InterPro" id="IPR007862">
    <property type="entry name" value="Adenylate_kinase_lid-dom"/>
</dbReference>
<dbReference type="InterPro" id="IPR027417">
    <property type="entry name" value="P-loop_NTPase"/>
</dbReference>
<dbReference type="NCBIfam" id="TIGR01351">
    <property type="entry name" value="adk"/>
    <property type="match status" value="1"/>
</dbReference>
<dbReference type="NCBIfam" id="NF001379">
    <property type="entry name" value="PRK00279.1-1"/>
    <property type="match status" value="1"/>
</dbReference>
<dbReference type="NCBIfam" id="NF001381">
    <property type="entry name" value="PRK00279.1-3"/>
    <property type="match status" value="1"/>
</dbReference>
<dbReference type="PANTHER" id="PTHR23359">
    <property type="entry name" value="NUCLEOTIDE KINASE"/>
    <property type="match status" value="1"/>
</dbReference>
<dbReference type="Pfam" id="PF00406">
    <property type="entry name" value="ADK"/>
    <property type="match status" value="1"/>
</dbReference>
<dbReference type="Pfam" id="PF05191">
    <property type="entry name" value="ADK_lid"/>
    <property type="match status" value="1"/>
</dbReference>
<dbReference type="PRINTS" id="PR00094">
    <property type="entry name" value="ADENYLTKNASE"/>
</dbReference>
<dbReference type="SUPFAM" id="SSF52540">
    <property type="entry name" value="P-loop containing nucleoside triphosphate hydrolases"/>
    <property type="match status" value="1"/>
</dbReference>
<dbReference type="PROSITE" id="PS00113">
    <property type="entry name" value="ADENYLATE_KINASE"/>
    <property type="match status" value="1"/>
</dbReference>
<comment type="function">
    <text evidence="1">Catalyzes the reversible transfer of the terminal phosphate group between ATP and AMP. Plays an important role in cellular energy homeostasis and in adenine nucleotide metabolism.</text>
</comment>
<comment type="catalytic activity">
    <reaction evidence="1">
        <text>AMP + ATP = 2 ADP</text>
        <dbReference type="Rhea" id="RHEA:12973"/>
        <dbReference type="ChEBI" id="CHEBI:30616"/>
        <dbReference type="ChEBI" id="CHEBI:456215"/>
        <dbReference type="ChEBI" id="CHEBI:456216"/>
        <dbReference type="EC" id="2.7.4.3"/>
    </reaction>
</comment>
<comment type="pathway">
    <text evidence="1">Purine metabolism; AMP biosynthesis via salvage pathway; AMP from ADP: step 1/1.</text>
</comment>
<comment type="subunit">
    <text evidence="1">Monomer.</text>
</comment>
<comment type="subcellular location">
    <subcellularLocation>
        <location evidence="1">Cytoplasm</location>
    </subcellularLocation>
</comment>
<comment type="domain">
    <text evidence="1">Consists of three domains, a large central CORE domain and two small peripheral domains, NMPbind and LID, which undergo movements during catalysis. The LID domain closes over the site of phosphoryl transfer upon ATP binding. Assembling and dissambling the active center during each catalytic cycle provides an effective means to prevent ATP hydrolysis.</text>
</comment>
<comment type="similarity">
    <text evidence="1">Belongs to the adenylate kinase family.</text>
</comment>
<keyword id="KW-0067">ATP-binding</keyword>
<keyword id="KW-0963">Cytoplasm</keyword>
<keyword id="KW-0418">Kinase</keyword>
<keyword id="KW-0545">Nucleotide biosynthesis</keyword>
<keyword id="KW-0547">Nucleotide-binding</keyword>
<keyword id="KW-0808">Transferase</keyword>
<proteinExistence type="inferred from homology"/>
<sequence>MRIILLGAPGTGKGTQGKFITEKYKIPQISTGDMLRESVVLKNKIGMIIKNIIEEGKLVSDEIVCHLIKNRIKKHDCINGFILDGFPRTIQQALYLSKKNIKIDYVLEFIIPHEYILERISGRRIHIQSGRIYHVKFKPPKIKDKDDLTGQTLITRKDDTKEGIKKRLEEYKKVHDPLVQYYIHEKKRGNIKFFQIDAMLSFSSIRKKLETILKK</sequence>
<gene>
    <name evidence="1" type="primary">adk</name>
    <name type="ordered locus">BUAP5A_477</name>
</gene>
<name>KAD_BUCA5</name>
<protein>
    <recommendedName>
        <fullName evidence="1">Adenylate kinase</fullName>
        <shortName evidence="1">AK</shortName>
        <ecNumber evidence="1">2.7.4.3</ecNumber>
    </recommendedName>
    <alternativeName>
        <fullName evidence="1">ATP-AMP transphosphorylase</fullName>
    </alternativeName>
    <alternativeName>
        <fullName evidence="1">ATP:AMP phosphotransferase</fullName>
    </alternativeName>
    <alternativeName>
        <fullName evidence="1">Adenylate monophosphate kinase</fullName>
    </alternativeName>
</protein>
<reference key="1">
    <citation type="journal article" date="2009" name="Science">
        <title>The dynamics and time scale of ongoing genomic erosion in symbiotic bacteria.</title>
        <authorList>
            <person name="Moran N.A."/>
            <person name="McLaughlin H.J."/>
            <person name="Sorek R."/>
        </authorList>
    </citation>
    <scope>NUCLEOTIDE SEQUENCE [LARGE SCALE GENOMIC DNA]</scope>
    <source>
        <strain>5A</strain>
    </source>
</reference>
<organism>
    <name type="scientific">Buchnera aphidicola subsp. Acyrthosiphon pisum (strain 5A)</name>
    <dbReference type="NCBI Taxonomy" id="563178"/>
    <lineage>
        <taxon>Bacteria</taxon>
        <taxon>Pseudomonadati</taxon>
        <taxon>Pseudomonadota</taxon>
        <taxon>Gammaproteobacteria</taxon>
        <taxon>Enterobacterales</taxon>
        <taxon>Erwiniaceae</taxon>
        <taxon>Buchnera</taxon>
    </lineage>
</organism>
<feature type="chain" id="PRO_1000191128" description="Adenylate kinase">
    <location>
        <begin position="1"/>
        <end position="215"/>
    </location>
</feature>
<feature type="region of interest" description="NMP" evidence="1">
    <location>
        <begin position="30"/>
        <end position="59"/>
    </location>
</feature>
<feature type="region of interest" description="LID">
    <location>
        <begin position="122"/>
        <end position="159"/>
    </location>
</feature>
<feature type="binding site" evidence="1">
    <location>
        <begin position="10"/>
        <end position="15"/>
    </location>
    <ligand>
        <name>ATP</name>
        <dbReference type="ChEBI" id="CHEBI:30616"/>
    </ligand>
</feature>
<feature type="binding site" evidence="1">
    <location>
        <position position="31"/>
    </location>
    <ligand>
        <name>AMP</name>
        <dbReference type="ChEBI" id="CHEBI:456215"/>
    </ligand>
</feature>
<feature type="binding site" evidence="1">
    <location>
        <position position="36"/>
    </location>
    <ligand>
        <name>AMP</name>
        <dbReference type="ChEBI" id="CHEBI:456215"/>
    </ligand>
</feature>
<feature type="binding site" evidence="1">
    <location>
        <begin position="57"/>
        <end position="59"/>
    </location>
    <ligand>
        <name>AMP</name>
        <dbReference type="ChEBI" id="CHEBI:456215"/>
    </ligand>
</feature>
<feature type="binding site" evidence="1">
    <location>
        <begin position="85"/>
        <end position="88"/>
    </location>
    <ligand>
        <name>AMP</name>
        <dbReference type="ChEBI" id="CHEBI:456215"/>
    </ligand>
</feature>
<feature type="binding site" evidence="1">
    <location>
        <position position="92"/>
    </location>
    <ligand>
        <name>AMP</name>
        <dbReference type="ChEBI" id="CHEBI:456215"/>
    </ligand>
</feature>
<feature type="binding site" evidence="1">
    <location>
        <position position="123"/>
    </location>
    <ligand>
        <name>ATP</name>
        <dbReference type="ChEBI" id="CHEBI:30616"/>
    </ligand>
</feature>
<feature type="binding site" evidence="1">
    <location>
        <begin position="132"/>
        <end position="133"/>
    </location>
    <ligand>
        <name>ATP</name>
        <dbReference type="ChEBI" id="CHEBI:30616"/>
    </ligand>
</feature>
<feature type="binding site" evidence="1">
    <location>
        <position position="156"/>
    </location>
    <ligand>
        <name>AMP</name>
        <dbReference type="ChEBI" id="CHEBI:456215"/>
    </ligand>
</feature>
<feature type="binding site" evidence="1">
    <location>
        <position position="167"/>
    </location>
    <ligand>
        <name>AMP</name>
        <dbReference type="ChEBI" id="CHEBI:456215"/>
    </ligand>
</feature>
<feature type="binding site" evidence="1">
    <location>
        <position position="200"/>
    </location>
    <ligand>
        <name>ATP</name>
        <dbReference type="ChEBI" id="CHEBI:30616"/>
    </ligand>
</feature>
<accession>B8D9R1</accession>